<protein>
    <recommendedName>
        <fullName>Kunitz-type serine protease inhibitor carinatin-1</fullName>
    </recommendedName>
</protein>
<dbReference type="EMBL" id="AY626935">
    <property type="protein sequence ID" value="AAT45411.1"/>
    <property type="molecule type" value="mRNA"/>
</dbReference>
<dbReference type="SMR" id="Q6ITB0"/>
<dbReference type="MEROPS" id="I02.052"/>
<dbReference type="GO" id="GO:0005615">
    <property type="term" value="C:extracellular space"/>
    <property type="evidence" value="ECO:0007669"/>
    <property type="project" value="TreeGrafter"/>
</dbReference>
<dbReference type="GO" id="GO:0004867">
    <property type="term" value="F:serine-type endopeptidase inhibitor activity"/>
    <property type="evidence" value="ECO:0007669"/>
    <property type="project" value="UniProtKB-KW"/>
</dbReference>
<dbReference type="GO" id="GO:0090729">
    <property type="term" value="F:toxin activity"/>
    <property type="evidence" value="ECO:0007669"/>
    <property type="project" value="UniProtKB-KW"/>
</dbReference>
<dbReference type="CDD" id="cd22594">
    <property type="entry name" value="Kunitz_textilinin-like"/>
    <property type="match status" value="1"/>
</dbReference>
<dbReference type="FunFam" id="4.10.410.10:FF:000021">
    <property type="entry name" value="Serine protease inhibitor, putative"/>
    <property type="match status" value="1"/>
</dbReference>
<dbReference type="Gene3D" id="4.10.410.10">
    <property type="entry name" value="Pancreatic trypsin inhibitor Kunitz domain"/>
    <property type="match status" value="1"/>
</dbReference>
<dbReference type="InterPro" id="IPR002223">
    <property type="entry name" value="Kunitz_BPTI"/>
</dbReference>
<dbReference type="InterPro" id="IPR036880">
    <property type="entry name" value="Kunitz_BPTI_sf"/>
</dbReference>
<dbReference type="InterPro" id="IPR020901">
    <property type="entry name" value="Prtase_inh_Kunz-CS"/>
</dbReference>
<dbReference type="InterPro" id="IPR050098">
    <property type="entry name" value="TFPI/VKTCI-like"/>
</dbReference>
<dbReference type="PANTHER" id="PTHR10083">
    <property type="entry name" value="KUNITZ-TYPE PROTEASE INHIBITOR-RELATED"/>
    <property type="match status" value="1"/>
</dbReference>
<dbReference type="PANTHER" id="PTHR10083:SF376">
    <property type="entry name" value="SERINE PEPTIDASE INHIBITOR, KUNITZ TYPE, 3"/>
    <property type="match status" value="1"/>
</dbReference>
<dbReference type="Pfam" id="PF00014">
    <property type="entry name" value="Kunitz_BPTI"/>
    <property type="match status" value="1"/>
</dbReference>
<dbReference type="PRINTS" id="PR00759">
    <property type="entry name" value="BASICPTASE"/>
</dbReference>
<dbReference type="SMART" id="SM00131">
    <property type="entry name" value="KU"/>
    <property type="match status" value="1"/>
</dbReference>
<dbReference type="SUPFAM" id="SSF57362">
    <property type="entry name" value="BPTI-like"/>
    <property type="match status" value="1"/>
</dbReference>
<dbReference type="PROSITE" id="PS00280">
    <property type="entry name" value="BPTI_KUNITZ_1"/>
    <property type="match status" value="1"/>
</dbReference>
<dbReference type="PROSITE" id="PS50279">
    <property type="entry name" value="BPTI_KUNITZ_2"/>
    <property type="match status" value="1"/>
</dbReference>
<comment type="function">
    <text evidence="1">Serine protease inhibitor.</text>
</comment>
<comment type="subcellular location">
    <subcellularLocation>
        <location evidence="1">Secreted</location>
    </subcellularLocation>
</comment>
<comment type="tissue specificity">
    <text>Expressed by the venom gland.</text>
</comment>
<comment type="similarity">
    <text evidence="4">Belongs to the venom Kunitz-type family.</text>
</comment>
<name>VKT1_TROCA</name>
<reference key="1">
    <citation type="submission" date="2004-05" db="EMBL/GenBank/DDBJ databases">
        <title>Rough-scaled snake venom gland cDNA encoding carinatin.</title>
        <authorList>
            <person name="Filippovich I."/>
            <person name="Sorokina N.I."/>
        </authorList>
    </citation>
    <scope>NUCLEOTIDE SEQUENCE [MRNA]</scope>
    <source>
        <tissue>Venom gland</tissue>
    </source>
</reference>
<organism>
    <name type="scientific">Tropidechis carinatus</name>
    <name type="common">Australian rough-scaled snake</name>
    <dbReference type="NCBI Taxonomy" id="100989"/>
    <lineage>
        <taxon>Eukaryota</taxon>
        <taxon>Metazoa</taxon>
        <taxon>Chordata</taxon>
        <taxon>Craniata</taxon>
        <taxon>Vertebrata</taxon>
        <taxon>Euteleostomi</taxon>
        <taxon>Lepidosauria</taxon>
        <taxon>Squamata</taxon>
        <taxon>Bifurcata</taxon>
        <taxon>Unidentata</taxon>
        <taxon>Episquamata</taxon>
        <taxon>Toxicofera</taxon>
        <taxon>Serpentes</taxon>
        <taxon>Colubroidea</taxon>
        <taxon>Elapidae</taxon>
        <taxon>Notechinae</taxon>
        <taxon>Tropidechis</taxon>
    </lineage>
</organism>
<feature type="signal peptide" evidence="2">
    <location>
        <begin position="1"/>
        <end position="24"/>
    </location>
</feature>
<feature type="chain" id="PRO_0000043178" description="Kunitz-type serine protease inhibitor carinatin-1">
    <location>
        <begin position="25"/>
        <end position="83"/>
    </location>
</feature>
<feature type="domain" description="BPTI/Kunitz inhibitor" evidence="3">
    <location>
        <begin position="31"/>
        <end position="81"/>
    </location>
</feature>
<feature type="site" description="Reactive bond for trypsin" evidence="1">
    <location>
        <begin position="41"/>
        <end position="42"/>
    </location>
</feature>
<feature type="disulfide bond" evidence="3">
    <location>
        <begin position="31"/>
        <end position="81"/>
    </location>
</feature>
<feature type="disulfide bond" evidence="3">
    <location>
        <begin position="40"/>
        <end position="64"/>
    </location>
</feature>
<feature type="disulfide bond" evidence="3">
    <location>
        <begin position="56"/>
        <end position="77"/>
    </location>
</feature>
<evidence type="ECO:0000250" key="1"/>
<evidence type="ECO:0000255" key="2"/>
<evidence type="ECO:0000255" key="3">
    <source>
        <dbReference type="PROSITE-ProRule" id="PRU00031"/>
    </source>
</evidence>
<evidence type="ECO:0000305" key="4"/>
<accession>Q6ITB0</accession>
<keyword id="KW-1015">Disulfide bond</keyword>
<keyword id="KW-0646">Protease inhibitor</keyword>
<keyword id="KW-0964">Secreted</keyword>
<keyword id="KW-0722">Serine protease inhibitor</keyword>
<keyword id="KW-0732">Signal</keyword>
<keyword id="KW-0800">Toxin</keyword>
<sequence length="83" mass="9286">MSSGGLLLLLGLLTLWEGLTPVSSKDRPDFCELPDDRGPCRGIFHAFYYNPDQRQCLEFIYGGCYGNANNFKTIDECERTCAA</sequence>
<proteinExistence type="evidence at transcript level"/>